<organism>
    <name type="scientific">Escherichia coli (strain K12)</name>
    <dbReference type="NCBI Taxonomy" id="83333"/>
    <lineage>
        <taxon>Bacteria</taxon>
        <taxon>Pseudomonadati</taxon>
        <taxon>Pseudomonadota</taxon>
        <taxon>Gammaproteobacteria</taxon>
        <taxon>Enterobacterales</taxon>
        <taxon>Enterobacteriaceae</taxon>
        <taxon>Escherichia</taxon>
    </lineage>
</organism>
<sequence length="591" mass="64977">MKKISLPKIGIRPVIDGRRMGVRESLEEQTMNMAKATAALLTEKLRHACGAAVECVISDTCIAGMAEAAACEEKFSSQNVGLTITVTPCWCYGSETIDMDPTRPKAIWGFNGTERPGAVYLAAALAAHSQKGIPAFSIYGHDVQDADDTSIPADVEEKLLRFARAGLAVASMKGKSYLSLGGVSMGIAGSIVDHNFFESWLGMKVQAVDMTELRRRIDQKIYDEAELEMALAWADKNFRYGEDENNKQYQRNAEQSRAVLRESLLMAMCIRDMMQGNSKLADIGRVEESLGYNAIAAGFQGQRHWTDQYPNGDTAEAILNSSFDWNGVREPFVVATENDSLNGVAMLMGHQLTGTAQVFADVRTYWSPEAIERVTGHKLDGLAEHGIIHLINSGSAALDGSCKQRDSEGNPTMKPHWEISQQEADACLAATEWCPAIHEYFRGGGYSSRFLTEGGVPFTMTRVNIIKGLGPVLQIAEGWSVELPKDVHDILNKRTNSTWPTTWFAPRLTGKGPFTDVYSVMANWGANHGVLTIGHVGADFITLASMLRIPVCMHNVEETKVYRPSAWAAHGMDIEGQDYRACQNYGPLYKR</sequence>
<proteinExistence type="evidence at protein level"/>
<reference key="1">
    <citation type="journal article" date="1989" name="Nucleic Acids Res.">
        <title>The nucleotide sequence of Escherichia coli genes for L-fucose dissimilation.</title>
        <authorList>
            <person name="Lu Z."/>
            <person name="Lin E.C.C."/>
        </authorList>
    </citation>
    <scope>NUCLEOTIDE SEQUENCE [GENOMIC DNA]</scope>
    <source>
        <strain>K12</strain>
    </source>
</reference>
<reference key="2">
    <citation type="journal article" date="1997" name="Science">
        <title>The complete genome sequence of Escherichia coli K-12.</title>
        <authorList>
            <person name="Blattner F.R."/>
            <person name="Plunkett G. III"/>
            <person name="Bloch C.A."/>
            <person name="Perna N.T."/>
            <person name="Burland V."/>
            <person name="Riley M."/>
            <person name="Collado-Vides J."/>
            <person name="Glasner J.D."/>
            <person name="Rode C.K."/>
            <person name="Mayhew G.F."/>
            <person name="Gregor J."/>
            <person name="Davis N.W."/>
            <person name="Kirkpatrick H.A."/>
            <person name="Goeden M.A."/>
            <person name="Rose D.J."/>
            <person name="Mau B."/>
            <person name="Shao Y."/>
        </authorList>
    </citation>
    <scope>NUCLEOTIDE SEQUENCE [LARGE SCALE GENOMIC DNA]</scope>
    <source>
        <strain>K12 / MG1655 / ATCC 47076</strain>
    </source>
</reference>
<reference key="3">
    <citation type="journal article" date="2006" name="Mol. Syst. Biol.">
        <title>Highly accurate genome sequences of Escherichia coli K-12 strains MG1655 and W3110.</title>
        <authorList>
            <person name="Hayashi K."/>
            <person name="Morooka N."/>
            <person name="Yamamoto Y."/>
            <person name="Fujita K."/>
            <person name="Isono K."/>
            <person name="Choi S."/>
            <person name="Ohtsubo E."/>
            <person name="Baba T."/>
            <person name="Wanner B.L."/>
            <person name="Mori H."/>
            <person name="Horiuchi T."/>
        </authorList>
    </citation>
    <scope>NUCLEOTIDE SEQUENCE [LARGE SCALE GENOMIC DNA]</scope>
    <source>
        <strain>K12 / W3110 / ATCC 27325 / DSM 5911</strain>
    </source>
</reference>
<reference key="4">
    <citation type="journal article" date="1994" name="Mol. Microbiol.">
        <title>Identification of a novel sugar-H+ symport protein, FucP, for transport of L-fucose into Escherichia coli.</title>
        <authorList>
            <person name="Gunn F.J."/>
            <person name="Tate C.G."/>
            <person name="Henderson P.J.F."/>
        </authorList>
    </citation>
    <scope>PROTEIN SEQUENCE OF 1-9</scope>
</reference>
<reference key="5">
    <citation type="journal article" date="1956" name="J. Biol. Chem.">
        <title>Enzymatic conversion of L-fucose to L-fuculose.</title>
        <authorList>
            <person name="Green M."/>
            <person name="Cohen S.S."/>
        </authorList>
    </citation>
    <scope>FUNCTION</scope>
</reference>
<reference key="6">
    <citation type="journal article" date="1971" name="J. Bacteriol.">
        <title>Metabolism of D-arabinose: a new pathway in Escherichia coli.</title>
        <authorList>
            <person name="LeBlanc D.J."/>
            <person name="Mortlock R.P."/>
        </authorList>
    </citation>
    <scope>FUNCTION</scope>
    <scope>INDUCTION</scope>
</reference>
<reference key="7">
    <citation type="journal article" date="1973" name="J. Bacteriol.">
        <title>Properties of D-arabinose isomerase purified from two strains of Escherichia coli.</title>
        <authorList>
            <person name="Boulter J.R."/>
            <person name="Gielow W.O."/>
        </authorList>
    </citation>
    <scope>FUNCTION</scope>
    <scope>CATALYTIC ACTIVITY</scope>
    <scope>COFACTOR</scope>
    <scope>ACTIVITY REGULATION</scope>
    <scope>BIOPHYSICOCHEMICAL PROPERTIES</scope>
    <scope>INDUCTION</scope>
    <source>
        <strain>K12</strain>
    </source>
</reference>
<reference key="8">
    <citation type="journal article" date="1995" name="Bioorg. Med. Chem.">
        <title>Cloning and overexpression of rhamnose isomerase and fucose isomerase.</title>
        <authorList>
            <person name="Garcia-Junceda E."/>
            <person name="Shen G.J."/>
            <person name="Alajarin R."/>
            <person name="Wong C.H."/>
        </authorList>
    </citation>
    <scope>FUNCTION</scope>
    <scope>CATALYTIC ACTIVITY</scope>
</reference>
<reference key="9">
    <citation type="journal article" date="2012" name="Enzyme Microb. Technol.">
        <title>Production of L-xylose from L-xylulose using Escherichia coli L-fucose isomerase.</title>
        <authorList>
            <person name="Usvalampi A."/>
            <person name="Turunen O."/>
            <person name="Valjakka J."/>
            <person name="Pastinen O."/>
            <person name="Leisola M."/>
            <person name="Nyyssoelae A."/>
        </authorList>
    </citation>
    <scope>FUNCTION</scope>
    <scope>CATALYTIC ACTIVITY</scope>
    <scope>ACTIVITY REGULATION</scope>
    <scope>BIOPHYSICOCHEMICAL PROPERTIES</scope>
    <source>
        <strain>K12</strain>
    </source>
</reference>
<reference key="10">
    <citation type="journal article" date="1997" name="J. Mol. Biol.">
        <title>Structure and mechanism of L-fucose isomerase from Escherichia coli.</title>
        <authorList>
            <person name="Seemann J.E."/>
            <person name="Schulz G.E."/>
        </authorList>
    </citation>
    <scope>X-RAY CRYSTALLOGRAPHY (2.5 ANGSTROMS) OF COMPLEX WITH L-FUCITOL AND MANGANESE</scope>
    <scope>ACTIVE SITES</scope>
    <scope>FUNCTION</scope>
    <scope>CATALYTIC ACTIVITY</scope>
    <scope>REACTION MECHANISM</scope>
    <scope>COFACTOR</scope>
    <scope>SUBUNIT</scope>
</reference>
<name>FUCI_ECOLI</name>
<comment type="function">
    <text evidence="1 2 3 4 5 6">Converts the aldose L-fucose into the corresponding ketose L-fuculose (PubMed:13319278, PubMed:4632320, PubMed:4928018, PubMed:8564401, PubMed:9367760). Also converts D-arabinose into D-ribulose (PubMed:13319278, PubMed:4632320, PubMed:4928018). In addition, catalyzes the isomerization of L-xylulose to L-xylose (PubMed:22133443).</text>
</comment>
<comment type="catalytic activity">
    <reaction evidence="3 5 6 13 14">
        <text>L-fucose = L-fuculose</text>
        <dbReference type="Rhea" id="RHEA:17233"/>
        <dbReference type="ChEBI" id="CHEBI:2181"/>
        <dbReference type="ChEBI" id="CHEBI:17617"/>
        <dbReference type="EC" id="5.3.1.25"/>
    </reaction>
</comment>
<comment type="catalytic activity">
    <reaction evidence="3 13 14">
        <text>D-arabinose = D-ribulose</text>
        <dbReference type="Rhea" id="RHEA:13849"/>
        <dbReference type="ChEBI" id="CHEBI:17173"/>
        <dbReference type="ChEBI" id="CHEBI:46994"/>
        <dbReference type="EC" id="5.3.1.3"/>
    </reaction>
</comment>
<comment type="catalytic activity">
    <reaction evidence="2">
        <text>L-xylopyranose = L-xylulose</text>
        <dbReference type="Rhea" id="RHEA:71251"/>
        <dbReference type="ChEBI" id="CHEBI:17399"/>
        <dbReference type="ChEBI" id="CHEBI:59275"/>
    </reaction>
</comment>
<comment type="cofactor">
    <cofactor evidence="3 6">
        <name>Mn(2+)</name>
        <dbReference type="ChEBI" id="CHEBI:29035"/>
    </cofactor>
    <text evidence="3">Can also use Co(2+).</text>
</comment>
<comment type="activity regulation">
    <text evidence="2 3">Inhibited by ribitol, L-arabitol and dulcitol (PubMed:4632320). Isomerization of L-xylulose to L-xylose is inhibited by xylitol (PubMed:22133443).</text>
</comment>
<comment type="biophysicochemical properties">
    <kinetics>
        <KM evidence="3">45 mM for L-fucose</KM>
        <KM evidence="3">280 mM for D-arabinose</KM>
        <KM evidence="2">41 mM for L-xylulose</KM>
        <Vmax evidence="2">0.231 umol/min/mg enzyme with L-xylulose as substrate</Vmax>
        <text evidence="2">kcat is 0.125 sec(-1) with L-xylulose as substrate.</text>
    </kinetics>
    <phDependence>
        <text evidence="3">Optimum pH is 7.6-10.6 with L-fucose or D-arabinose as substrate.</text>
    </phDependence>
    <temperatureDependence>
        <text evidence="2">Optimum temperature is 50 degrees Celsius with L-xylulose as substrate.</text>
    </temperatureDependence>
</comment>
<comment type="pathway">
    <text evidence="15">Carbohydrate degradation; L-fucose degradation; L-lactaldehyde and glycerone phosphate from L-fucose: step 1/3.</text>
</comment>
<comment type="subunit">
    <text evidence="6">Homohexamer.</text>
</comment>
<comment type="interaction">
    <interactant intactId="EBI-908978">
        <id>P69922</id>
    </interactant>
    <interactant intactId="EBI-908978">
        <id>P69922</id>
        <label>fucI</label>
    </interactant>
    <organismsDiffer>false</organismsDiffer>
    <experiments>2</experiments>
</comment>
<comment type="subcellular location">
    <subcellularLocation>
        <location evidence="12">Cytoplasm</location>
    </subcellularLocation>
</comment>
<comment type="induction">
    <text evidence="3 4">By L-fucose.</text>
</comment>
<comment type="similarity">
    <text evidence="12">Belongs to the L-fucose isomerase family.</text>
</comment>
<dbReference type="EC" id="5.3.1.25" evidence="3 5 6 13 14"/>
<dbReference type="EC" id="5.3.1.3" evidence="3 13 14"/>
<dbReference type="EMBL" id="X15025">
    <property type="protein sequence ID" value="CAA33127.1"/>
    <property type="molecule type" value="Genomic_DNA"/>
</dbReference>
<dbReference type="EMBL" id="U29581">
    <property type="protein sequence ID" value="AAB40452.1"/>
    <property type="molecule type" value="Genomic_DNA"/>
</dbReference>
<dbReference type="EMBL" id="U00096">
    <property type="protein sequence ID" value="AAC75844.1"/>
    <property type="molecule type" value="Genomic_DNA"/>
</dbReference>
<dbReference type="EMBL" id="AP009048">
    <property type="protein sequence ID" value="BAE76874.1"/>
    <property type="molecule type" value="Genomic_DNA"/>
</dbReference>
<dbReference type="PIR" id="JS0185">
    <property type="entry name" value="ISECFI"/>
</dbReference>
<dbReference type="RefSeq" id="NP_417282.1">
    <property type="nucleotide sequence ID" value="NC_000913.3"/>
</dbReference>
<dbReference type="RefSeq" id="WP_000724153.1">
    <property type="nucleotide sequence ID" value="NZ_LN832404.1"/>
</dbReference>
<dbReference type="PDB" id="1FUI">
    <property type="method" value="X-ray"/>
    <property type="resolution" value="2.50 A"/>
    <property type="chains" value="A/B/C/D/E/F=1-591"/>
</dbReference>
<dbReference type="PDBsum" id="1FUI"/>
<dbReference type="SMR" id="P69922"/>
<dbReference type="BioGRID" id="4259466">
    <property type="interactions" value="11"/>
</dbReference>
<dbReference type="BioGRID" id="850555">
    <property type="interactions" value="1"/>
</dbReference>
<dbReference type="FunCoup" id="P69922">
    <property type="interactions" value="112"/>
</dbReference>
<dbReference type="IntAct" id="P69922">
    <property type="interactions" value="2"/>
</dbReference>
<dbReference type="STRING" id="511145.b2802"/>
<dbReference type="jPOST" id="P69922"/>
<dbReference type="PaxDb" id="511145-b2802"/>
<dbReference type="EnsemblBacteria" id="AAC75844">
    <property type="protein sequence ID" value="AAC75844"/>
    <property type="gene ID" value="b2802"/>
</dbReference>
<dbReference type="GeneID" id="75172886"/>
<dbReference type="GeneID" id="946195"/>
<dbReference type="KEGG" id="ecj:JW2773"/>
<dbReference type="KEGG" id="eco:b2802"/>
<dbReference type="KEGG" id="ecoc:C3026_15405"/>
<dbReference type="PATRIC" id="fig|1411691.4.peg.3931"/>
<dbReference type="EchoBASE" id="EB0345"/>
<dbReference type="eggNOG" id="COG2407">
    <property type="taxonomic scope" value="Bacteria"/>
</dbReference>
<dbReference type="HOGENOM" id="CLU_033326_1_0_6"/>
<dbReference type="InParanoid" id="P69922"/>
<dbReference type="OMA" id="NHGAISY"/>
<dbReference type="OrthoDB" id="9760430at2"/>
<dbReference type="PhylomeDB" id="P69922"/>
<dbReference type="BioCyc" id="EcoCyc:FUCISOM-MONOMER"/>
<dbReference type="BioCyc" id="MetaCyc:FUCISOM-MONOMER"/>
<dbReference type="BRENDA" id="5.3.1.25">
    <property type="organism ID" value="2026"/>
</dbReference>
<dbReference type="UniPathway" id="UPA00563">
    <property type="reaction ID" value="UER00624"/>
</dbReference>
<dbReference type="EvolutionaryTrace" id="P69922"/>
<dbReference type="PRO" id="PR:P69922"/>
<dbReference type="Proteomes" id="UP000000625">
    <property type="component" value="Chromosome"/>
</dbReference>
<dbReference type="GO" id="GO:0005829">
    <property type="term" value="C:cytosol"/>
    <property type="evidence" value="ECO:0007005"/>
    <property type="project" value="UniProtKB"/>
</dbReference>
<dbReference type="GO" id="GO:0008790">
    <property type="term" value="F:arabinose isomerase activity"/>
    <property type="evidence" value="ECO:0000314"/>
    <property type="project" value="EcoCyc"/>
</dbReference>
<dbReference type="GO" id="GO:0042802">
    <property type="term" value="F:identical protein binding"/>
    <property type="evidence" value="ECO:0000353"/>
    <property type="project" value="IntAct"/>
</dbReference>
<dbReference type="GO" id="GO:0008736">
    <property type="term" value="F:L-fucose isomerase activity"/>
    <property type="evidence" value="ECO:0000314"/>
    <property type="project" value="EcoCyc"/>
</dbReference>
<dbReference type="GO" id="GO:0030145">
    <property type="term" value="F:manganese ion binding"/>
    <property type="evidence" value="ECO:0007669"/>
    <property type="project" value="UniProtKB-UniRule"/>
</dbReference>
<dbReference type="GO" id="GO:0019571">
    <property type="term" value="P:D-arabinose catabolic process"/>
    <property type="evidence" value="ECO:0000315"/>
    <property type="project" value="EcoCyc"/>
</dbReference>
<dbReference type="GO" id="GO:0042355">
    <property type="term" value="P:L-fucose catabolic process"/>
    <property type="evidence" value="ECO:0000315"/>
    <property type="project" value="EcoCyc"/>
</dbReference>
<dbReference type="CDD" id="cd03556">
    <property type="entry name" value="L-fucose_isomerase"/>
    <property type="match status" value="1"/>
</dbReference>
<dbReference type="FunFam" id="3.20.14.10:FF:000001">
    <property type="entry name" value="L-fucose isomerase"/>
    <property type="match status" value="1"/>
</dbReference>
<dbReference type="FunFam" id="3.40.275.10:FF:000001">
    <property type="entry name" value="L-fucose isomerase"/>
    <property type="match status" value="1"/>
</dbReference>
<dbReference type="FunFam" id="3.40.50.1070:FF:000001">
    <property type="entry name" value="L-fucose isomerase"/>
    <property type="match status" value="1"/>
</dbReference>
<dbReference type="Gene3D" id="3.40.50.1070">
    <property type="match status" value="1"/>
</dbReference>
<dbReference type="Gene3D" id="3.40.275.10">
    <property type="entry name" value="L-fucose Isomerase, Chain A, domain 2"/>
    <property type="match status" value="1"/>
</dbReference>
<dbReference type="Gene3D" id="3.20.14.10">
    <property type="entry name" value="L-fucose/L-arabinose isomerase, C-terminal"/>
    <property type="match status" value="1"/>
</dbReference>
<dbReference type="HAMAP" id="MF_01254">
    <property type="entry name" value="Fucose_iso"/>
    <property type="match status" value="1"/>
</dbReference>
<dbReference type="InterPro" id="IPR004216">
    <property type="entry name" value="Fuc/Ara_isomerase_C"/>
</dbReference>
<dbReference type="InterPro" id="IPR038393">
    <property type="entry name" value="Fuc_iso_dom3_sf"/>
</dbReference>
<dbReference type="InterPro" id="IPR015888">
    <property type="entry name" value="Fuc_isomerase_C"/>
</dbReference>
<dbReference type="InterPro" id="IPR038391">
    <property type="entry name" value="Fucose_iso_dom1_sf"/>
</dbReference>
<dbReference type="InterPro" id="IPR012888">
    <property type="entry name" value="Fucose_iso_N1"/>
</dbReference>
<dbReference type="InterPro" id="IPR005763">
    <property type="entry name" value="Fucose_isomerase"/>
</dbReference>
<dbReference type="InterPro" id="IPR038392">
    <property type="entry name" value="Fucose_isomerase_dom2_sf"/>
</dbReference>
<dbReference type="InterPro" id="IPR009015">
    <property type="entry name" value="Fucose_isomerase_N/cen_sf"/>
</dbReference>
<dbReference type="InterPro" id="IPR012889">
    <property type="entry name" value="Fucose_isomerase_N2"/>
</dbReference>
<dbReference type="NCBIfam" id="TIGR01089">
    <property type="entry name" value="fucI"/>
    <property type="match status" value="1"/>
</dbReference>
<dbReference type="NCBIfam" id="NF008220">
    <property type="entry name" value="PRK10991.1"/>
    <property type="match status" value="1"/>
</dbReference>
<dbReference type="PANTHER" id="PTHR37840">
    <property type="entry name" value="L-FUCOSE ISOMERASE"/>
    <property type="match status" value="1"/>
</dbReference>
<dbReference type="PANTHER" id="PTHR37840:SF1">
    <property type="entry name" value="L-FUCOSE ISOMERASE"/>
    <property type="match status" value="1"/>
</dbReference>
<dbReference type="Pfam" id="PF02952">
    <property type="entry name" value="Fucose_iso_C"/>
    <property type="match status" value="1"/>
</dbReference>
<dbReference type="Pfam" id="PF07881">
    <property type="entry name" value="Fucose_iso_N1"/>
    <property type="match status" value="1"/>
</dbReference>
<dbReference type="Pfam" id="PF07882">
    <property type="entry name" value="Fucose_iso_N2"/>
    <property type="match status" value="1"/>
</dbReference>
<dbReference type="SUPFAM" id="SSF50443">
    <property type="entry name" value="FucI/AraA C-terminal domain-like"/>
    <property type="match status" value="1"/>
</dbReference>
<dbReference type="SUPFAM" id="SSF53743">
    <property type="entry name" value="FucI/AraA N-terminal and middle domains"/>
    <property type="match status" value="1"/>
</dbReference>
<keyword id="KW-0002">3D-structure</keyword>
<keyword id="KW-0119">Carbohydrate metabolism</keyword>
<keyword id="KW-0963">Cytoplasm</keyword>
<keyword id="KW-0903">Direct protein sequencing</keyword>
<keyword id="KW-0294">Fucose metabolism</keyword>
<keyword id="KW-0413">Isomerase</keyword>
<keyword id="KW-0464">Manganese</keyword>
<keyword id="KW-0479">Metal-binding</keyword>
<keyword id="KW-1185">Reference proteome</keyword>
<accession>P69922</accession>
<accession>P11552</accession>
<accession>Q2MA32</accession>
<evidence type="ECO:0000269" key="1">
    <source>
    </source>
</evidence>
<evidence type="ECO:0000269" key="2">
    <source>
    </source>
</evidence>
<evidence type="ECO:0000269" key="3">
    <source>
    </source>
</evidence>
<evidence type="ECO:0000269" key="4">
    <source>
    </source>
</evidence>
<evidence type="ECO:0000269" key="5">
    <source>
    </source>
</evidence>
<evidence type="ECO:0000269" key="6">
    <source>
    </source>
</evidence>
<evidence type="ECO:0000303" key="7">
    <source>
    </source>
</evidence>
<evidence type="ECO:0000303" key="8">
    <source>
    </source>
</evidence>
<evidence type="ECO:0000303" key="9">
    <source>
    </source>
</evidence>
<evidence type="ECO:0000303" key="10">
    <source>
    </source>
</evidence>
<evidence type="ECO:0000303" key="11">
    <source>
    </source>
</evidence>
<evidence type="ECO:0000305" key="12"/>
<evidence type="ECO:0000305" key="13">
    <source>
    </source>
</evidence>
<evidence type="ECO:0000305" key="14">
    <source>
    </source>
</evidence>
<evidence type="ECO:0000305" key="15">
    <source>
    </source>
</evidence>
<evidence type="ECO:0007744" key="16">
    <source>
        <dbReference type="PDB" id="1FUI"/>
    </source>
</evidence>
<evidence type="ECO:0007829" key="17">
    <source>
        <dbReference type="PDB" id="1FUI"/>
    </source>
</evidence>
<feature type="chain" id="PRO_0000204145" description="L-fucose isomerase">
    <location>
        <begin position="1"/>
        <end position="591"/>
    </location>
</feature>
<feature type="active site" description="Proton acceptor" evidence="6">
    <location>
        <position position="337"/>
    </location>
</feature>
<feature type="active site" description="Proton acceptor" evidence="6">
    <location>
        <position position="361"/>
    </location>
</feature>
<feature type="binding site" evidence="6 16">
    <location>
        <position position="337"/>
    </location>
    <ligand>
        <name>Mn(2+)</name>
        <dbReference type="ChEBI" id="CHEBI:29035"/>
    </ligand>
</feature>
<feature type="binding site" evidence="6 16">
    <location>
        <position position="361"/>
    </location>
    <ligand>
        <name>Mn(2+)</name>
        <dbReference type="ChEBI" id="CHEBI:29035"/>
    </ligand>
</feature>
<feature type="binding site" evidence="6 16">
    <location>
        <position position="528"/>
    </location>
    <ligand>
        <name>Mn(2+)</name>
        <dbReference type="ChEBI" id="CHEBI:29035"/>
    </ligand>
</feature>
<feature type="sequence conflict" description="In Ref. 4; AA sequence." evidence="12" ref="4">
    <original>K</original>
    <variation>P</variation>
    <location>
        <position position="8"/>
    </location>
</feature>
<feature type="strand" evidence="17">
    <location>
        <begin position="8"/>
        <end position="14"/>
    </location>
</feature>
<feature type="turn" evidence="17">
    <location>
        <begin position="19"/>
        <end position="21"/>
    </location>
</feature>
<feature type="helix" evidence="17">
    <location>
        <begin position="22"/>
        <end position="44"/>
    </location>
</feature>
<feature type="strand" evidence="17">
    <location>
        <begin position="55"/>
        <end position="57"/>
    </location>
</feature>
<feature type="helix" evidence="17">
    <location>
        <begin position="65"/>
        <end position="76"/>
    </location>
</feature>
<feature type="turn" evidence="17">
    <location>
        <begin position="77"/>
        <end position="79"/>
    </location>
</feature>
<feature type="strand" evidence="17">
    <location>
        <begin position="80"/>
        <end position="89"/>
    </location>
</feature>
<feature type="helix" evidence="17">
    <location>
        <begin position="93"/>
        <end position="96"/>
    </location>
</feature>
<feature type="strand" evidence="17">
    <location>
        <begin position="101"/>
        <end position="103"/>
    </location>
</feature>
<feature type="strand" evidence="17">
    <location>
        <begin position="105"/>
        <end position="109"/>
    </location>
</feature>
<feature type="strand" evidence="17">
    <location>
        <begin position="113"/>
        <end position="115"/>
    </location>
</feature>
<feature type="helix" evidence="17">
    <location>
        <begin position="117"/>
        <end position="130"/>
    </location>
</feature>
<feature type="strand" evidence="17">
    <location>
        <begin position="136"/>
        <end position="138"/>
    </location>
</feature>
<feature type="helix" evidence="17">
    <location>
        <begin position="153"/>
        <end position="172"/>
    </location>
</feature>
<feature type="strand" evidence="17">
    <location>
        <begin position="176"/>
        <end position="182"/>
    </location>
</feature>
<feature type="helix" evidence="17">
    <location>
        <begin position="188"/>
        <end position="190"/>
    </location>
</feature>
<feature type="helix" evidence="17">
    <location>
        <begin position="194"/>
        <end position="201"/>
    </location>
</feature>
<feature type="strand" evidence="17">
    <location>
        <begin position="204"/>
        <end position="208"/>
    </location>
</feature>
<feature type="helix" evidence="17">
    <location>
        <begin position="211"/>
        <end position="218"/>
    </location>
</feature>
<feature type="helix" evidence="17">
    <location>
        <begin position="224"/>
        <end position="237"/>
    </location>
</feature>
<feature type="helix" evidence="17">
    <location>
        <begin position="247"/>
        <end position="249"/>
    </location>
</feature>
<feature type="helix" evidence="17">
    <location>
        <begin position="253"/>
        <end position="275"/>
    </location>
</feature>
<feature type="helix" evidence="17">
    <location>
        <begin position="279"/>
        <end position="282"/>
    </location>
</feature>
<feature type="helix" evidence="17">
    <location>
        <begin position="286"/>
        <end position="289"/>
    </location>
</feature>
<feature type="strand" evidence="17">
    <location>
        <begin position="294"/>
        <end position="299"/>
    </location>
</feature>
<feature type="turn" evidence="17">
    <location>
        <begin position="302"/>
        <end position="308"/>
    </location>
</feature>
<feature type="helix" evidence="17">
    <location>
        <begin position="313"/>
        <end position="320"/>
    </location>
</feature>
<feature type="strand" evidence="17">
    <location>
        <begin position="321"/>
        <end position="324"/>
    </location>
</feature>
<feature type="strand" evidence="17">
    <location>
        <begin position="334"/>
        <end position="336"/>
    </location>
</feature>
<feature type="helix" evidence="17">
    <location>
        <begin position="340"/>
        <end position="353"/>
    </location>
</feature>
<feature type="strand" evidence="17">
    <location>
        <begin position="358"/>
        <end position="366"/>
    </location>
</feature>
<feature type="helix" evidence="17">
    <location>
        <begin position="368"/>
        <end position="375"/>
    </location>
</feature>
<feature type="helix" evidence="17">
    <location>
        <begin position="381"/>
        <end position="385"/>
    </location>
</feature>
<feature type="strand" evidence="17">
    <location>
        <begin position="387"/>
        <end position="390"/>
    </location>
</feature>
<feature type="helix" evidence="17">
    <location>
        <begin position="398"/>
        <end position="401"/>
    </location>
</feature>
<feature type="helix" evidence="17">
    <location>
        <begin position="416"/>
        <end position="418"/>
    </location>
</feature>
<feature type="helix" evidence="17">
    <location>
        <begin position="421"/>
        <end position="429"/>
    </location>
</feature>
<feature type="strand" evidence="17">
    <location>
        <begin position="432"/>
        <end position="435"/>
    </location>
</feature>
<feature type="turn" evidence="17">
    <location>
        <begin position="438"/>
        <end position="440"/>
    </location>
</feature>
<feature type="strand" evidence="17">
    <location>
        <begin position="446"/>
        <end position="449"/>
    </location>
</feature>
<feature type="strand" evidence="17">
    <location>
        <begin position="457"/>
        <end position="466"/>
    </location>
</feature>
<feature type="turn" evidence="17">
    <location>
        <begin position="467"/>
        <end position="469"/>
    </location>
</feature>
<feature type="strand" evidence="17">
    <location>
        <begin position="470"/>
        <end position="480"/>
    </location>
</feature>
<feature type="helix" evidence="17">
    <location>
        <begin position="485"/>
        <end position="494"/>
    </location>
</feature>
<feature type="strand" evidence="17">
    <location>
        <begin position="501"/>
        <end position="506"/>
    </location>
</feature>
<feature type="helix" evidence="17">
    <location>
        <begin position="512"/>
        <end position="514"/>
    </location>
</feature>
<feature type="helix" evidence="17">
    <location>
        <begin position="517"/>
        <end position="522"/>
    </location>
</feature>
<feature type="strand" evidence="17">
    <location>
        <begin position="525"/>
        <end position="534"/>
    </location>
</feature>
<feature type="helix" evidence="17">
    <location>
        <begin position="537"/>
        <end position="547"/>
    </location>
</feature>
<feature type="strand" evidence="17">
    <location>
        <begin position="551"/>
        <end position="553"/>
    </location>
</feature>
<feature type="helix" evidence="17">
    <location>
        <begin position="558"/>
        <end position="560"/>
    </location>
</feature>
<feature type="helix" evidence="17">
    <location>
        <begin position="566"/>
        <end position="569"/>
    </location>
</feature>
<feature type="helix" evidence="17">
    <location>
        <begin position="574"/>
        <end position="585"/>
    </location>
</feature>
<gene>
    <name evidence="7" type="primary">fucI</name>
    <name type="ordered locus">b2802</name>
    <name type="ordered locus">JW2773</name>
</gene>
<protein>
    <recommendedName>
        <fullName evidence="9">L-fucose isomerase</fullName>
        <shortName evidence="11">FucIase</shortName>
        <shortName evidence="10">FucIso</shortName>
        <ecNumber evidence="3 5 6 13 14">5.3.1.25</ecNumber>
    </recommendedName>
    <alternativeName>
        <fullName>6-deoxy-L-galactose isomerase</fullName>
    </alternativeName>
    <alternativeName>
        <fullName evidence="8">D-arabinose isomerase</fullName>
        <ecNumber evidence="3 13 14">5.3.1.3</ecNumber>
    </alternativeName>
</protein>